<name>PAND_BACC7</name>
<proteinExistence type="inferred from homology"/>
<evidence type="ECO:0000255" key="1">
    <source>
        <dbReference type="HAMAP-Rule" id="MF_00446"/>
    </source>
</evidence>
<reference key="1">
    <citation type="submission" date="2008-10" db="EMBL/GenBank/DDBJ databases">
        <title>Genome sequence of Bacillus cereus AH187.</title>
        <authorList>
            <person name="Dodson R.J."/>
            <person name="Durkin A.S."/>
            <person name="Rosovitz M.J."/>
            <person name="Rasko D.A."/>
            <person name="Kolsto A.B."/>
            <person name="Okstad O.A."/>
            <person name="Ravel J."/>
            <person name="Sutton G."/>
        </authorList>
    </citation>
    <scope>NUCLEOTIDE SEQUENCE [LARGE SCALE GENOMIC DNA]</scope>
    <source>
        <strain>AH187</strain>
    </source>
</reference>
<feature type="chain" id="PRO_1000124753" description="Aspartate 1-decarboxylase beta chain" evidence="1">
    <location>
        <begin position="1"/>
        <end position="24"/>
    </location>
</feature>
<feature type="chain" id="PRO_1000124754" description="Aspartate 1-decarboxylase alpha chain" evidence="1">
    <location>
        <begin position="25"/>
        <end position="127"/>
    </location>
</feature>
<feature type="active site" description="Schiff-base intermediate with substrate; via pyruvic acid" evidence="1">
    <location>
        <position position="25"/>
    </location>
</feature>
<feature type="active site" description="Proton donor" evidence="1">
    <location>
        <position position="58"/>
    </location>
</feature>
<feature type="binding site" evidence="1">
    <location>
        <position position="57"/>
    </location>
    <ligand>
        <name>substrate</name>
    </ligand>
</feature>
<feature type="binding site" evidence="1">
    <location>
        <begin position="73"/>
        <end position="75"/>
    </location>
    <ligand>
        <name>substrate</name>
    </ligand>
</feature>
<feature type="modified residue" description="Pyruvic acid (Ser)" evidence="1">
    <location>
        <position position="25"/>
    </location>
</feature>
<protein>
    <recommendedName>
        <fullName evidence="1">Aspartate 1-decarboxylase</fullName>
        <ecNumber evidence="1">4.1.1.11</ecNumber>
    </recommendedName>
    <alternativeName>
        <fullName evidence="1">Aspartate alpha-decarboxylase</fullName>
    </alternativeName>
    <component>
        <recommendedName>
            <fullName evidence="1">Aspartate 1-decarboxylase beta chain</fullName>
        </recommendedName>
    </component>
    <component>
        <recommendedName>
            <fullName evidence="1">Aspartate 1-decarboxylase alpha chain</fullName>
        </recommendedName>
    </component>
</protein>
<dbReference type="EC" id="4.1.1.11" evidence="1"/>
<dbReference type="EMBL" id="CP001177">
    <property type="protein sequence ID" value="ACJ80201.1"/>
    <property type="molecule type" value="Genomic_DNA"/>
</dbReference>
<dbReference type="SMR" id="B7HL55"/>
<dbReference type="KEGG" id="bcr:BCAH187_A1708"/>
<dbReference type="HOGENOM" id="CLU_115305_2_0_9"/>
<dbReference type="UniPathway" id="UPA00028">
    <property type="reaction ID" value="UER00002"/>
</dbReference>
<dbReference type="Proteomes" id="UP000002214">
    <property type="component" value="Chromosome"/>
</dbReference>
<dbReference type="GO" id="GO:0005829">
    <property type="term" value="C:cytosol"/>
    <property type="evidence" value="ECO:0007669"/>
    <property type="project" value="TreeGrafter"/>
</dbReference>
<dbReference type="GO" id="GO:0004068">
    <property type="term" value="F:aspartate 1-decarboxylase activity"/>
    <property type="evidence" value="ECO:0007669"/>
    <property type="project" value="UniProtKB-UniRule"/>
</dbReference>
<dbReference type="GO" id="GO:0006523">
    <property type="term" value="P:alanine biosynthetic process"/>
    <property type="evidence" value="ECO:0007669"/>
    <property type="project" value="InterPro"/>
</dbReference>
<dbReference type="GO" id="GO:0015940">
    <property type="term" value="P:pantothenate biosynthetic process"/>
    <property type="evidence" value="ECO:0007669"/>
    <property type="project" value="UniProtKB-UniRule"/>
</dbReference>
<dbReference type="CDD" id="cd06919">
    <property type="entry name" value="Asp_decarbox"/>
    <property type="match status" value="1"/>
</dbReference>
<dbReference type="Gene3D" id="2.40.40.20">
    <property type="match status" value="1"/>
</dbReference>
<dbReference type="HAMAP" id="MF_00446">
    <property type="entry name" value="PanD"/>
    <property type="match status" value="1"/>
</dbReference>
<dbReference type="InterPro" id="IPR009010">
    <property type="entry name" value="Asp_de-COase-like_dom_sf"/>
</dbReference>
<dbReference type="InterPro" id="IPR003190">
    <property type="entry name" value="Asp_decarbox"/>
</dbReference>
<dbReference type="NCBIfam" id="TIGR00223">
    <property type="entry name" value="panD"/>
    <property type="match status" value="1"/>
</dbReference>
<dbReference type="PANTHER" id="PTHR21012">
    <property type="entry name" value="ASPARTATE 1-DECARBOXYLASE"/>
    <property type="match status" value="1"/>
</dbReference>
<dbReference type="PANTHER" id="PTHR21012:SF0">
    <property type="entry name" value="ASPARTATE 1-DECARBOXYLASE"/>
    <property type="match status" value="1"/>
</dbReference>
<dbReference type="Pfam" id="PF02261">
    <property type="entry name" value="Asp_decarbox"/>
    <property type="match status" value="1"/>
</dbReference>
<dbReference type="PIRSF" id="PIRSF006246">
    <property type="entry name" value="Asp_decarbox"/>
    <property type="match status" value="1"/>
</dbReference>
<dbReference type="SUPFAM" id="SSF50692">
    <property type="entry name" value="ADC-like"/>
    <property type="match status" value="1"/>
</dbReference>
<keyword id="KW-0068">Autocatalytic cleavage</keyword>
<keyword id="KW-0963">Cytoplasm</keyword>
<keyword id="KW-0210">Decarboxylase</keyword>
<keyword id="KW-0456">Lyase</keyword>
<keyword id="KW-0566">Pantothenate biosynthesis</keyword>
<keyword id="KW-0670">Pyruvate</keyword>
<keyword id="KW-0704">Schiff base</keyword>
<keyword id="KW-0865">Zymogen</keyword>
<sequence length="127" mass="13909">MFRTMMRAKLHRATVTEANLNYVGSITIDEDLMDAVNIVENEKVQIVNNNNGARLETYVIKGERGSGVVCLNGAAARLVQPGDKVIIICYGLVAEENIHKQEPKIAVLDDDNQIIEMLGAEKAGTIL</sequence>
<organism>
    <name type="scientific">Bacillus cereus (strain AH187)</name>
    <dbReference type="NCBI Taxonomy" id="405534"/>
    <lineage>
        <taxon>Bacteria</taxon>
        <taxon>Bacillati</taxon>
        <taxon>Bacillota</taxon>
        <taxon>Bacilli</taxon>
        <taxon>Bacillales</taxon>
        <taxon>Bacillaceae</taxon>
        <taxon>Bacillus</taxon>
        <taxon>Bacillus cereus group</taxon>
    </lineage>
</organism>
<comment type="function">
    <text evidence="1">Catalyzes the pyruvoyl-dependent decarboxylation of aspartate to produce beta-alanine.</text>
</comment>
<comment type="catalytic activity">
    <reaction evidence="1">
        <text>L-aspartate + H(+) = beta-alanine + CO2</text>
        <dbReference type="Rhea" id="RHEA:19497"/>
        <dbReference type="ChEBI" id="CHEBI:15378"/>
        <dbReference type="ChEBI" id="CHEBI:16526"/>
        <dbReference type="ChEBI" id="CHEBI:29991"/>
        <dbReference type="ChEBI" id="CHEBI:57966"/>
        <dbReference type="EC" id="4.1.1.11"/>
    </reaction>
</comment>
<comment type="cofactor">
    <cofactor evidence="1">
        <name>pyruvate</name>
        <dbReference type="ChEBI" id="CHEBI:15361"/>
    </cofactor>
    <text evidence="1">Binds 1 pyruvoyl group covalently per subunit.</text>
</comment>
<comment type="pathway">
    <text evidence="1">Cofactor biosynthesis; (R)-pantothenate biosynthesis; beta-alanine from L-aspartate: step 1/1.</text>
</comment>
<comment type="subunit">
    <text evidence="1">Heterooctamer of four alpha and four beta subunits.</text>
</comment>
<comment type="subcellular location">
    <subcellularLocation>
        <location evidence="1">Cytoplasm</location>
    </subcellularLocation>
</comment>
<comment type="PTM">
    <text evidence="1">Is synthesized initially as an inactive proenzyme, which is activated by self-cleavage at a specific serine bond to produce a beta-subunit with a hydroxyl group at its C-terminus and an alpha-subunit with a pyruvoyl group at its N-terminus.</text>
</comment>
<comment type="similarity">
    <text evidence="1">Belongs to the PanD family.</text>
</comment>
<accession>B7HL55</accession>
<gene>
    <name evidence="1" type="primary">panD</name>
    <name type="ordered locus">BCAH187_A1708</name>
</gene>